<feature type="chain" id="PRO_0000263377" description="Peptide chain release factor 1">
    <location>
        <begin position="1"/>
        <end position="361"/>
    </location>
</feature>
<feature type="modified residue" description="N5-methylglutamine" evidence="1">
    <location>
        <position position="240"/>
    </location>
</feature>
<sequence>MASAQLIEQLKNVEATFQELTVRLADPDVATDPAELQRIAKARSSLEATVQTFHEWQKLTRELKQTEELLREVASDDPELEAMARAELEQLRVRQEQLEEKLTLLLLPRDPNDEKNIMLEIRAGTGGEEAALWAADLARMYTRYAEKMGWSVRLASLSEGEMGGYKEAILEIRGDQVYSKLKFEAGVHRVQRVPVTEAQGRVHTSTATVAVMPEVDEVEVVIDPKDIEIKTARSGGAGGQNVNKVETAVDLLHKPTGIRVFCTEERSQLQNRQRAMQILRAKLYEMKLQEQQASISSARRMQVGTGSRSEKIRTYNYKDNRVTDHRLNQNFLLEPILEGELDELIQACIGLYQKELLAELS</sequence>
<organism>
    <name type="scientific">Synechococcus sp. (strain JA-3-3Ab)</name>
    <name type="common">Cyanobacteria bacterium Yellowstone A-Prime</name>
    <dbReference type="NCBI Taxonomy" id="321327"/>
    <lineage>
        <taxon>Bacteria</taxon>
        <taxon>Bacillati</taxon>
        <taxon>Cyanobacteriota</taxon>
        <taxon>Cyanophyceae</taxon>
        <taxon>Synechococcales</taxon>
        <taxon>Synechococcaceae</taxon>
        <taxon>Synechococcus</taxon>
    </lineage>
</organism>
<gene>
    <name evidence="1" type="primary">prfA</name>
    <name type="ordered locus">CYA_1445</name>
</gene>
<evidence type="ECO:0000255" key="1">
    <source>
        <dbReference type="HAMAP-Rule" id="MF_00093"/>
    </source>
</evidence>
<proteinExistence type="inferred from homology"/>
<accession>Q2JUK1</accession>
<dbReference type="EMBL" id="CP000239">
    <property type="protein sequence ID" value="ABC99613.1"/>
    <property type="molecule type" value="Genomic_DNA"/>
</dbReference>
<dbReference type="RefSeq" id="WP_011430291.1">
    <property type="nucleotide sequence ID" value="NC_007775.1"/>
</dbReference>
<dbReference type="SMR" id="Q2JUK1"/>
<dbReference type="STRING" id="321327.CYA_1445"/>
<dbReference type="KEGG" id="cya:CYA_1445"/>
<dbReference type="eggNOG" id="COG0216">
    <property type="taxonomic scope" value="Bacteria"/>
</dbReference>
<dbReference type="HOGENOM" id="CLU_036856_0_1_3"/>
<dbReference type="OrthoDB" id="9806673at2"/>
<dbReference type="Proteomes" id="UP000008818">
    <property type="component" value="Chromosome"/>
</dbReference>
<dbReference type="GO" id="GO:0005737">
    <property type="term" value="C:cytoplasm"/>
    <property type="evidence" value="ECO:0007669"/>
    <property type="project" value="UniProtKB-SubCell"/>
</dbReference>
<dbReference type="GO" id="GO:0016149">
    <property type="term" value="F:translation release factor activity, codon specific"/>
    <property type="evidence" value="ECO:0007669"/>
    <property type="project" value="UniProtKB-UniRule"/>
</dbReference>
<dbReference type="FunFam" id="3.30.160.20:FF:000004">
    <property type="entry name" value="Peptide chain release factor 1"/>
    <property type="match status" value="1"/>
</dbReference>
<dbReference type="FunFam" id="3.30.70.1660:FF:000002">
    <property type="entry name" value="Peptide chain release factor 1"/>
    <property type="match status" value="1"/>
</dbReference>
<dbReference type="FunFam" id="3.30.70.1660:FF:000014">
    <property type="entry name" value="Peptide chain release factor 1"/>
    <property type="match status" value="1"/>
</dbReference>
<dbReference type="Gene3D" id="3.30.160.20">
    <property type="match status" value="1"/>
</dbReference>
<dbReference type="Gene3D" id="3.30.70.1660">
    <property type="match status" value="1"/>
</dbReference>
<dbReference type="Gene3D" id="6.10.140.1950">
    <property type="match status" value="1"/>
</dbReference>
<dbReference type="HAMAP" id="MF_00093">
    <property type="entry name" value="Rel_fac_1"/>
    <property type="match status" value="1"/>
</dbReference>
<dbReference type="InterPro" id="IPR005139">
    <property type="entry name" value="PCRF"/>
</dbReference>
<dbReference type="InterPro" id="IPR000352">
    <property type="entry name" value="Pep_chain_release_fac_I"/>
</dbReference>
<dbReference type="InterPro" id="IPR045853">
    <property type="entry name" value="Pep_chain_release_fac_I_sf"/>
</dbReference>
<dbReference type="InterPro" id="IPR050057">
    <property type="entry name" value="Prokaryotic/Mito_RF"/>
</dbReference>
<dbReference type="InterPro" id="IPR004373">
    <property type="entry name" value="RF-1"/>
</dbReference>
<dbReference type="NCBIfam" id="TIGR00019">
    <property type="entry name" value="prfA"/>
    <property type="match status" value="1"/>
</dbReference>
<dbReference type="NCBIfam" id="NF001859">
    <property type="entry name" value="PRK00591.1"/>
    <property type="match status" value="1"/>
</dbReference>
<dbReference type="PANTHER" id="PTHR43804">
    <property type="entry name" value="LD18447P"/>
    <property type="match status" value="1"/>
</dbReference>
<dbReference type="PANTHER" id="PTHR43804:SF8">
    <property type="entry name" value="PEPTIDE CHAIN RELEASE FACTOR APG3, CHLOROPLASTIC"/>
    <property type="match status" value="1"/>
</dbReference>
<dbReference type="Pfam" id="PF03462">
    <property type="entry name" value="PCRF"/>
    <property type="match status" value="1"/>
</dbReference>
<dbReference type="Pfam" id="PF00472">
    <property type="entry name" value="RF-1"/>
    <property type="match status" value="1"/>
</dbReference>
<dbReference type="SMART" id="SM00937">
    <property type="entry name" value="PCRF"/>
    <property type="match status" value="1"/>
</dbReference>
<dbReference type="SUPFAM" id="SSF75620">
    <property type="entry name" value="Release factor"/>
    <property type="match status" value="1"/>
</dbReference>
<dbReference type="PROSITE" id="PS00745">
    <property type="entry name" value="RF_PROK_I"/>
    <property type="match status" value="1"/>
</dbReference>
<protein>
    <recommendedName>
        <fullName evidence="1">Peptide chain release factor 1</fullName>
        <shortName evidence="1">RF-1</shortName>
    </recommendedName>
</protein>
<keyword id="KW-0963">Cytoplasm</keyword>
<keyword id="KW-0488">Methylation</keyword>
<keyword id="KW-0648">Protein biosynthesis</keyword>
<name>RF1_SYNJA</name>
<comment type="function">
    <text evidence="1">Peptide chain release factor 1 directs the termination of translation in response to the peptide chain termination codons UAG and UAA.</text>
</comment>
<comment type="subcellular location">
    <subcellularLocation>
        <location evidence="1">Cytoplasm</location>
    </subcellularLocation>
</comment>
<comment type="PTM">
    <text evidence="1">Methylated by PrmC. Methylation increases the termination efficiency of RF1.</text>
</comment>
<comment type="similarity">
    <text evidence="1">Belongs to the prokaryotic/mitochondrial release factor family.</text>
</comment>
<reference key="1">
    <citation type="journal article" date="2007" name="ISME J.">
        <title>Population level functional diversity in a microbial community revealed by comparative genomic and metagenomic analyses.</title>
        <authorList>
            <person name="Bhaya D."/>
            <person name="Grossman A.R."/>
            <person name="Steunou A.-S."/>
            <person name="Khuri N."/>
            <person name="Cohan F.M."/>
            <person name="Hamamura N."/>
            <person name="Melendrez M.C."/>
            <person name="Bateson M.M."/>
            <person name="Ward D.M."/>
            <person name="Heidelberg J.F."/>
        </authorList>
    </citation>
    <scope>NUCLEOTIDE SEQUENCE [LARGE SCALE GENOMIC DNA]</scope>
    <source>
        <strain>JA-3-3Ab</strain>
    </source>
</reference>